<reference key="1">
    <citation type="journal article" date="2006" name="Lancet">
        <title>Complete genome sequence of USA300, an epidemic clone of community-acquired meticillin-resistant Staphylococcus aureus.</title>
        <authorList>
            <person name="Diep B.A."/>
            <person name="Gill S.R."/>
            <person name="Chang R.F."/>
            <person name="Phan T.H."/>
            <person name="Chen J.H."/>
            <person name="Davidson M.G."/>
            <person name="Lin F."/>
            <person name="Lin J."/>
            <person name="Carleton H.A."/>
            <person name="Mongodin E.F."/>
            <person name="Sensabaugh G.F."/>
            <person name="Perdreau-Remington F."/>
        </authorList>
    </citation>
    <scope>NUCLEOTIDE SEQUENCE [LARGE SCALE GENOMIC DNA]</scope>
    <source>
        <strain>USA300</strain>
    </source>
</reference>
<evidence type="ECO:0000255" key="1">
    <source>
        <dbReference type="HAMAP-Rule" id="MF_00171"/>
    </source>
</evidence>
<sequence>MRILVEIAYQGNNFLGFQIQQNGRTVQQQFEKLLQRMHKRHVRIHPSSRTDRGVHAIQQYFHFDTELNIPMSQWQYAMNRTLPDDIYVNNVVTVDDDFHCRYDCVGKRYRYKVYQAQHRDPFQSGLKTFIPETLDLGKMNRAAQQFIGTHDFTGFCSQKTEVESKVRTLYQSEIVKTDDGFDYIVTGSGFLYNMVRVLVAFLIEVGKGRHEVSDVPKLLESKNRKNVPFTAPAEGLYLEKIYLDENELLKDFGNDIKIHRKKSLQND</sequence>
<comment type="function">
    <text evidence="1">Formation of pseudouridine at positions 38, 39 and 40 in the anticodon stem and loop of transfer RNAs.</text>
</comment>
<comment type="catalytic activity">
    <reaction evidence="1">
        <text>uridine(38/39/40) in tRNA = pseudouridine(38/39/40) in tRNA</text>
        <dbReference type="Rhea" id="RHEA:22376"/>
        <dbReference type="Rhea" id="RHEA-COMP:10085"/>
        <dbReference type="Rhea" id="RHEA-COMP:10087"/>
        <dbReference type="ChEBI" id="CHEBI:65314"/>
        <dbReference type="ChEBI" id="CHEBI:65315"/>
        <dbReference type="EC" id="5.4.99.12"/>
    </reaction>
</comment>
<comment type="subunit">
    <text evidence="1">Homodimer.</text>
</comment>
<comment type="similarity">
    <text evidence="1">Belongs to the tRNA pseudouridine synthase TruA family.</text>
</comment>
<dbReference type="EC" id="5.4.99.12" evidence="1"/>
<dbReference type="EMBL" id="CP000255">
    <property type="protein sequence ID" value="ABD21458.1"/>
    <property type="molecule type" value="Genomic_DNA"/>
</dbReference>
<dbReference type="RefSeq" id="WP_001221860.1">
    <property type="nucleotide sequence ID" value="NZ_CP027476.1"/>
</dbReference>
<dbReference type="SMR" id="Q2FES0"/>
<dbReference type="KEGG" id="saa:SAUSA300_2173"/>
<dbReference type="HOGENOM" id="CLU_014673_0_1_9"/>
<dbReference type="OMA" id="ADAFCHN"/>
<dbReference type="Proteomes" id="UP000001939">
    <property type="component" value="Chromosome"/>
</dbReference>
<dbReference type="GO" id="GO:0003723">
    <property type="term" value="F:RNA binding"/>
    <property type="evidence" value="ECO:0007669"/>
    <property type="project" value="InterPro"/>
</dbReference>
<dbReference type="GO" id="GO:0160147">
    <property type="term" value="F:tRNA pseudouridine(38-40) synthase activity"/>
    <property type="evidence" value="ECO:0007669"/>
    <property type="project" value="UniProtKB-EC"/>
</dbReference>
<dbReference type="GO" id="GO:0031119">
    <property type="term" value="P:tRNA pseudouridine synthesis"/>
    <property type="evidence" value="ECO:0007669"/>
    <property type="project" value="UniProtKB-UniRule"/>
</dbReference>
<dbReference type="CDD" id="cd02570">
    <property type="entry name" value="PseudoU_synth_EcTruA"/>
    <property type="match status" value="1"/>
</dbReference>
<dbReference type="FunFam" id="3.30.70.580:FF:000001">
    <property type="entry name" value="tRNA pseudouridine synthase A"/>
    <property type="match status" value="1"/>
</dbReference>
<dbReference type="Gene3D" id="3.30.70.660">
    <property type="entry name" value="Pseudouridine synthase I, catalytic domain, C-terminal subdomain"/>
    <property type="match status" value="1"/>
</dbReference>
<dbReference type="Gene3D" id="3.30.70.580">
    <property type="entry name" value="Pseudouridine synthase I, catalytic domain, N-terminal subdomain"/>
    <property type="match status" value="1"/>
</dbReference>
<dbReference type="HAMAP" id="MF_00171">
    <property type="entry name" value="TruA"/>
    <property type="match status" value="1"/>
</dbReference>
<dbReference type="InterPro" id="IPR020103">
    <property type="entry name" value="PsdUridine_synth_cat_dom_sf"/>
</dbReference>
<dbReference type="InterPro" id="IPR001406">
    <property type="entry name" value="PsdUridine_synth_TruA"/>
</dbReference>
<dbReference type="InterPro" id="IPR020097">
    <property type="entry name" value="PsdUridine_synth_TruA_a/b_dom"/>
</dbReference>
<dbReference type="InterPro" id="IPR020095">
    <property type="entry name" value="PsdUridine_synth_TruA_C"/>
</dbReference>
<dbReference type="InterPro" id="IPR020094">
    <property type="entry name" value="TruA/RsuA/RluB/E/F_N"/>
</dbReference>
<dbReference type="NCBIfam" id="TIGR00071">
    <property type="entry name" value="hisT_truA"/>
    <property type="match status" value="1"/>
</dbReference>
<dbReference type="PANTHER" id="PTHR11142">
    <property type="entry name" value="PSEUDOURIDYLATE SYNTHASE"/>
    <property type="match status" value="1"/>
</dbReference>
<dbReference type="PANTHER" id="PTHR11142:SF0">
    <property type="entry name" value="TRNA PSEUDOURIDINE SYNTHASE-LIKE 1"/>
    <property type="match status" value="1"/>
</dbReference>
<dbReference type="Pfam" id="PF01416">
    <property type="entry name" value="PseudoU_synth_1"/>
    <property type="match status" value="2"/>
</dbReference>
<dbReference type="PIRSF" id="PIRSF001430">
    <property type="entry name" value="tRNA_psdUrid_synth"/>
    <property type="match status" value="1"/>
</dbReference>
<dbReference type="SUPFAM" id="SSF55120">
    <property type="entry name" value="Pseudouridine synthase"/>
    <property type="match status" value="1"/>
</dbReference>
<protein>
    <recommendedName>
        <fullName evidence="1">tRNA pseudouridine synthase A</fullName>
        <ecNumber evidence="1">5.4.99.12</ecNumber>
    </recommendedName>
    <alternativeName>
        <fullName evidence="1">tRNA pseudouridine(38-40) synthase</fullName>
    </alternativeName>
    <alternativeName>
        <fullName evidence="1">tRNA pseudouridylate synthase I</fullName>
    </alternativeName>
    <alternativeName>
        <fullName evidence="1">tRNA-uridine isomerase I</fullName>
    </alternativeName>
</protein>
<organism>
    <name type="scientific">Staphylococcus aureus (strain USA300)</name>
    <dbReference type="NCBI Taxonomy" id="367830"/>
    <lineage>
        <taxon>Bacteria</taxon>
        <taxon>Bacillati</taxon>
        <taxon>Bacillota</taxon>
        <taxon>Bacilli</taxon>
        <taxon>Bacillales</taxon>
        <taxon>Staphylococcaceae</taxon>
        <taxon>Staphylococcus</taxon>
    </lineage>
</organism>
<name>TRUA_STAA3</name>
<feature type="chain" id="PRO_1000017185" description="tRNA pseudouridine synthase A">
    <location>
        <begin position="1"/>
        <end position="267"/>
    </location>
</feature>
<feature type="active site" description="Nucleophile" evidence="1">
    <location>
        <position position="51"/>
    </location>
</feature>
<feature type="binding site" evidence="1">
    <location>
        <position position="109"/>
    </location>
    <ligand>
        <name>substrate</name>
    </ligand>
</feature>
<gene>
    <name evidence="1" type="primary">truA</name>
    <name type="ordered locus">SAUSA300_2173</name>
</gene>
<accession>Q2FES0</accession>
<keyword id="KW-0413">Isomerase</keyword>
<keyword id="KW-0819">tRNA processing</keyword>
<proteinExistence type="inferred from homology"/>